<keyword id="KW-0945">Host-virus interaction</keyword>
<keyword id="KW-1017">Isopeptide bond</keyword>
<keyword id="KW-0426">Late protein</keyword>
<keyword id="KW-1129">Modulation of host ubiquitin pathway by viral ubl</keyword>
<keyword id="KW-1130">Modulation of host ubiquitin pathway by virus</keyword>
<keyword id="KW-1185">Reference proteome</keyword>
<keyword id="KW-0832">Ubl conjugation</keyword>
<keyword id="KW-0833">Ubl conjugation pathway</keyword>
<reference key="1">
    <citation type="journal article" date="1993" name="J. Gen. Virol.">
        <title>Nucleotide sequence of the ubiquitin-39K gene region from the Orgyia pseudotsugata multinucleocapsid nuclear polyhedrosis virus genome.</title>
        <authorList>
            <person name="Russell R.L.Q."/>
            <person name="Rohrmann G.F."/>
        </authorList>
    </citation>
    <scope>NUCLEOTIDE SEQUENCE [GENOMIC DNA]</scope>
</reference>
<reference key="2">
    <citation type="journal article" date="1997" name="Virology">
        <title>The sequence of the Orgyia pseudotsugata multinucleocapsid nuclear polyhedrosis virus genome.</title>
        <authorList>
            <person name="Ahrens C.H."/>
            <person name="Russell R.R."/>
            <person name="Funk C.J."/>
            <person name="Evans J."/>
            <person name="Harwood S."/>
            <person name="Rohrmann G.F."/>
        </authorList>
    </citation>
    <scope>NUCLEOTIDE SEQUENCE [LARGE SCALE GENOMIC DNA]</scope>
</reference>
<organismHost>
    <name type="scientific">Orgyia pseudotsugata</name>
    <name type="common">Douglas-fir tussock moth</name>
    <dbReference type="NCBI Taxonomy" id="33414"/>
</organismHost>
<accession>Q05120</accession>
<evidence type="ECO:0000250" key="1"/>
<evidence type="ECO:0000255" key="2">
    <source>
        <dbReference type="PROSITE-ProRule" id="PRU00214"/>
    </source>
</evidence>
<evidence type="ECO:0000305" key="3"/>
<organism>
    <name type="scientific">Orgyia pseudotsugata multicapsid polyhedrosis virus</name>
    <name type="common">OpMNPV</name>
    <dbReference type="NCBI Taxonomy" id="262177"/>
    <lineage>
        <taxon>Viruses</taxon>
        <taxon>Viruses incertae sedis</taxon>
        <taxon>Naldaviricetes</taxon>
        <taxon>Lefavirales</taxon>
        <taxon>Baculoviridae</taxon>
        <taxon>Alphabaculovirus</taxon>
        <taxon>Alphabaculovirus orpseudotsugatae</taxon>
    </lineage>
</organism>
<proteinExistence type="inferred from homology"/>
<gene>
    <name type="primary">V-UBI</name>
    <name type="ORF">ORF25</name>
</gene>
<feature type="chain" id="PRO_0000035983" description="Ubiquitin-like protein">
    <location>
        <begin position="1"/>
        <end position="76"/>
    </location>
</feature>
<feature type="propeptide" id="PRO_0000035984" evidence="3">
    <location>
        <begin position="77"/>
        <end position="93"/>
    </location>
</feature>
<feature type="cross-link" description="Glycyl lysine isopeptide (Lys-Gly) (interchain with G-Cter in ubiquitin)" evidence="1">
    <location>
        <position position="48"/>
    </location>
</feature>
<feature type="cross-link" description="Glycyl lysine isopeptide (Gly-Lys) (interchain with K-? in acceptor proteins)" evidence="2">
    <location>
        <position position="76"/>
    </location>
</feature>
<protein>
    <recommendedName>
        <fullName>Ubiquitin-like protein</fullName>
    </recommendedName>
</protein>
<comment type="function">
    <text>Ubiquitin may play a role in viral life cycles, or in virus-host interactions. It is covalently linked to coat protein subunits of several different plant and animal viruses.</text>
</comment>
<comment type="similarity">
    <text evidence="3">Belongs to the ubiquitin family.</text>
</comment>
<sequence>MQIFVKTLTGKTITVETEPGDTVGQVKQKIADKEGVPVDQQRLIYAGKQLEDAQTLADYNIQKESTLHMVLRLRGGNGLRKGKRRCLSLLQFI</sequence>
<name>UBIL_NPVOP</name>
<dbReference type="EMBL" id="D13375">
    <property type="protein sequence ID" value="BAA02639.1"/>
    <property type="molecule type" value="Genomic_DNA"/>
</dbReference>
<dbReference type="EMBL" id="U75930">
    <property type="protein sequence ID" value="AAC59024.1"/>
    <property type="molecule type" value="Genomic_DNA"/>
</dbReference>
<dbReference type="PIR" id="JQ2029">
    <property type="entry name" value="JQ2029"/>
</dbReference>
<dbReference type="RefSeq" id="NP_046181.1">
    <property type="nucleotide sequence ID" value="NC_001875.2"/>
</dbReference>
<dbReference type="SMR" id="Q05120"/>
<dbReference type="KEGG" id="vg:912026"/>
<dbReference type="OrthoDB" id="19231at10239"/>
<dbReference type="Proteomes" id="UP000009248">
    <property type="component" value="Genome"/>
</dbReference>
<dbReference type="GO" id="GO:0039648">
    <property type="term" value="P:symbiont-mediated perturbation of host ubiquitin-like protein modification"/>
    <property type="evidence" value="ECO:0007669"/>
    <property type="project" value="UniProtKB-KW"/>
</dbReference>
<dbReference type="FunFam" id="3.10.20.90:FF:000009">
    <property type="entry name" value="Ubiquitin-60S ribosomal protein"/>
    <property type="match status" value="1"/>
</dbReference>
<dbReference type="Gene3D" id="3.10.20.90">
    <property type="entry name" value="Phosphatidylinositol 3-kinase Catalytic Subunit, Chain A, domain 1"/>
    <property type="match status" value="1"/>
</dbReference>
<dbReference type="InterPro" id="IPR000626">
    <property type="entry name" value="Ubiquitin-like_dom"/>
</dbReference>
<dbReference type="InterPro" id="IPR029071">
    <property type="entry name" value="Ubiquitin-like_domsf"/>
</dbReference>
<dbReference type="InterPro" id="IPR019954">
    <property type="entry name" value="Ubiquitin_CS"/>
</dbReference>
<dbReference type="InterPro" id="IPR019956">
    <property type="entry name" value="Ubiquitin_dom"/>
</dbReference>
<dbReference type="InterPro" id="IPR050158">
    <property type="entry name" value="Ubiquitin_ubiquitin-like"/>
</dbReference>
<dbReference type="PANTHER" id="PTHR10666">
    <property type="entry name" value="UBIQUITIN"/>
    <property type="match status" value="1"/>
</dbReference>
<dbReference type="Pfam" id="PF00240">
    <property type="entry name" value="ubiquitin"/>
    <property type="match status" value="1"/>
</dbReference>
<dbReference type="PRINTS" id="PR00348">
    <property type="entry name" value="UBIQUITIN"/>
</dbReference>
<dbReference type="SMART" id="SM00213">
    <property type="entry name" value="UBQ"/>
    <property type="match status" value="1"/>
</dbReference>
<dbReference type="SUPFAM" id="SSF54236">
    <property type="entry name" value="Ubiquitin-like"/>
    <property type="match status" value="1"/>
</dbReference>
<dbReference type="PROSITE" id="PS00299">
    <property type="entry name" value="UBIQUITIN_1"/>
    <property type="match status" value="1"/>
</dbReference>
<dbReference type="PROSITE" id="PS50053">
    <property type="entry name" value="UBIQUITIN_2"/>
    <property type="match status" value="1"/>
</dbReference>